<dbReference type="EMBL" id="CP001339">
    <property type="protein sequence ID" value="ACL73403.1"/>
    <property type="molecule type" value="Genomic_DNA"/>
</dbReference>
<dbReference type="RefSeq" id="WP_012638879.1">
    <property type="nucleotide sequence ID" value="NC_011901.1"/>
</dbReference>
<dbReference type="SMR" id="B8GV57"/>
<dbReference type="STRING" id="396588.Tgr7_2323"/>
<dbReference type="KEGG" id="tgr:Tgr7_2323"/>
<dbReference type="eggNOG" id="COG0088">
    <property type="taxonomic scope" value="Bacteria"/>
</dbReference>
<dbReference type="HOGENOM" id="CLU_041575_5_2_6"/>
<dbReference type="OrthoDB" id="9803201at2"/>
<dbReference type="Proteomes" id="UP000002383">
    <property type="component" value="Chromosome"/>
</dbReference>
<dbReference type="GO" id="GO:1990904">
    <property type="term" value="C:ribonucleoprotein complex"/>
    <property type="evidence" value="ECO:0007669"/>
    <property type="project" value="UniProtKB-KW"/>
</dbReference>
<dbReference type="GO" id="GO:0005840">
    <property type="term" value="C:ribosome"/>
    <property type="evidence" value="ECO:0007669"/>
    <property type="project" value="UniProtKB-KW"/>
</dbReference>
<dbReference type="GO" id="GO:0019843">
    <property type="term" value="F:rRNA binding"/>
    <property type="evidence" value="ECO:0007669"/>
    <property type="project" value="UniProtKB-UniRule"/>
</dbReference>
<dbReference type="GO" id="GO:0003735">
    <property type="term" value="F:structural constituent of ribosome"/>
    <property type="evidence" value="ECO:0007669"/>
    <property type="project" value="InterPro"/>
</dbReference>
<dbReference type="GO" id="GO:0006412">
    <property type="term" value="P:translation"/>
    <property type="evidence" value="ECO:0007669"/>
    <property type="project" value="UniProtKB-UniRule"/>
</dbReference>
<dbReference type="Gene3D" id="3.40.1370.10">
    <property type="match status" value="1"/>
</dbReference>
<dbReference type="HAMAP" id="MF_01328_B">
    <property type="entry name" value="Ribosomal_uL4_B"/>
    <property type="match status" value="1"/>
</dbReference>
<dbReference type="InterPro" id="IPR002136">
    <property type="entry name" value="Ribosomal_uL4"/>
</dbReference>
<dbReference type="InterPro" id="IPR013005">
    <property type="entry name" value="Ribosomal_uL4-like"/>
</dbReference>
<dbReference type="InterPro" id="IPR023574">
    <property type="entry name" value="Ribosomal_uL4_dom_sf"/>
</dbReference>
<dbReference type="NCBIfam" id="TIGR03953">
    <property type="entry name" value="rplD_bact"/>
    <property type="match status" value="1"/>
</dbReference>
<dbReference type="PANTHER" id="PTHR10746">
    <property type="entry name" value="50S RIBOSOMAL PROTEIN L4"/>
    <property type="match status" value="1"/>
</dbReference>
<dbReference type="PANTHER" id="PTHR10746:SF6">
    <property type="entry name" value="LARGE RIBOSOMAL SUBUNIT PROTEIN UL4M"/>
    <property type="match status" value="1"/>
</dbReference>
<dbReference type="Pfam" id="PF00573">
    <property type="entry name" value="Ribosomal_L4"/>
    <property type="match status" value="1"/>
</dbReference>
<dbReference type="SUPFAM" id="SSF52166">
    <property type="entry name" value="Ribosomal protein L4"/>
    <property type="match status" value="1"/>
</dbReference>
<evidence type="ECO:0000255" key="1">
    <source>
        <dbReference type="HAMAP-Rule" id="MF_01328"/>
    </source>
</evidence>
<evidence type="ECO:0000256" key="2">
    <source>
        <dbReference type="SAM" id="MobiDB-lite"/>
    </source>
</evidence>
<evidence type="ECO:0000305" key="3"/>
<organism>
    <name type="scientific">Thioalkalivibrio sulfidiphilus (strain HL-EbGR7)</name>
    <dbReference type="NCBI Taxonomy" id="396588"/>
    <lineage>
        <taxon>Bacteria</taxon>
        <taxon>Pseudomonadati</taxon>
        <taxon>Pseudomonadota</taxon>
        <taxon>Gammaproteobacteria</taxon>
        <taxon>Chromatiales</taxon>
        <taxon>Ectothiorhodospiraceae</taxon>
        <taxon>Thioalkalivibrio</taxon>
    </lineage>
</organism>
<name>RL4_THISH</name>
<comment type="function">
    <text evidence="1">One of the primary rRNA binding proteins, this protein initially binds near the 5'-end of the 23S rRNA. It is important during the early stages of 50S assembly. It makes multiple contacts with different domains of the 23S rRNA in the assembled 50S subunit and ribosome.</text>
</comment>
<comment type="function">
    <text evidence="1">Forms part of the polypeptide exit tunnel.</text>
</comment>
<comment type="subunit">
    <text evidence="1">Part of the 50S ribosomal subunit.</text>
</comment>
<comment type="similarity">
    <text evidence="1">Belongs to the universal ribosomal protein uL4 family.</text>
</comment>
<proteinExistence type="inferred from homology"/>
<accession>B8GV57</accession>
<protein>
    <recommendedName>
        <fullName evidence="1">Large ribosomal subunit protein uL4</fullName>
    </recommendedName>
    <alternativeName>
        <fullName evidence="3">50S ribosomal protein L4</fullName>
    </alternativeName>
</protein>
<keyword id="KW-1185">Reference proteome</keyword>
<keyword id="KW-0687">Ribonucleoprotein</keyword>
<keyword id="KW-0689">Ribosomal protein</keyword>
<keyword id="KW-0694">RNA-binding</keyword>
<keyword id="KW-0699">rRNA-binding</keyword>
<gene>
    <name evidence="1" type="primary">rplD</name>
    <name type="ordered locus">Tgr7_2323</name>
</gene>
<feature type="chain" id="PRO_1000166033" description="Large ribosomal subunit protein uL4">
    <location>
        <begin position="1"/>
        <end position="201"/>
    </location>
</feature>
<feature type="region of interest" description="Disordered" evidence="2">
    <location>
        <begin position="43"/>
        <end position="69"/>
    </location>
</feature>
<sequence>MKLQVQDTKKDLEVSDQTFGREFNEDLVHQAVVAYMAGGRAGTKAQKGRSDVSGGGAKPWKQKGSGRARAGTIRSPIWRTGGKVFAARPRDYSQKLNRKMYRAAMRSIFSELVRQERLVVVDSFAVDAPKTKGLLEKLGGLGVSNALIVTDQADANLYLSARNLPGVDVSEVGGLDPVSLVGFEKVLITVPALKQVEEWLA</sequence>
<reference key="1">
    <citation type="journal article" date="2011" name="Stand. Genomic Sci.">
        <title>Complete genome sequence of 'Thioalkalivibrio sulfidophilus' HL-EbGr7.</title>
        <authorList>
            <person name="Muyzer G."/>
            <person name="Sorokin D.Y."/>
            <person name="Mavromatis K."/>
            <person name="Lapidus A."/>
            <person name="Clum A."/>
            <person name="Ivanova N."/>
            <person name="Pati A."/>
            <person name="d'Haeseleer P."/>
            <person name="Woyke T."/>
            <person name="Kyrpides N.C."/>
        </authorList>
    </citation>
    <scope>NUCLEOTIDE SEQUENCE [LARGE SCALE GENOMIC DNA]</scope>
    <source>
        <strain>HL-EbGR7</strain>
    </source>
</reference>